<accession>Q12DF1</accession>
<gene>
    <name type="primary">rhmD</name>
    <name type="ordered locus">Bpro_1493</name>
</gene>
<comment type="function">
    <text evidence="2">Catalyzes the dehydration of L-rhamnonate to 2-keto-3-deoxy-L-rhamnonate (KDR).</text>
</comment>
<comment type="catalytic activity">
    <reaction>
        <text>L-rhamnonate = 2-dehydro-3-deoxy-L-rhamnonate + H2O</text>
        <dbReference type="Rhea" id="RHEA:23080"/>
        <dbReference type="ChEBI" id="CHEBI:15377"/>
        <dbReference type="ChEBI" id="CHEBI:58118"/>
        <dbReference type="ChEBI" id="CHEBI:58371"/>
        <dbReference type="EC" id="4.2.1.90"/>
    </reaction>
</comment>
<comment type="cofactor">
    <cofactor evidence="1">
        <name>Mg(2+)</name>
        <dbReference type="ChEBI" id="CHEBI:18420"/>
    </cofactor>
    <text evidence="1">Binds 1 Mg(2+) ion per subunit.</text>
</comment>
<comment type="subunit">
    <text evidence="1">Homooctamer; tetramer of dimers.</text>
</comment>
<comment type="miscellaneous">
    <text evidence="1">Reaction proceeds via a syn dehydration.</text>
</comment>
<comment type="similarity">
    <text evidence="3">Belongs to the mandelate racemase/muconate lactonizing enzyme family. RhamD subfamily.</text>
</comment>
<evidence type="ECO:0000250" key="1"/>
<evidence type="ECO:0000269" key="2">
    <source>
    </source>
</evidence>
<evidence type="ECO:0000305" key="3"/>
<dbReference type="EC" id="4.2.1.90"/>
<dbReference type="EMBL" id="CP000316">
    <property type="protein sequence ID" value="ABE43441.1"/>
    <property type="molecule type" value="Genomic_DNA"/>
</dbReference>
<dbReference type="RefSeq" id="WP_011482440.1">
    <property type="nucleotide sequence ID" value="NC_007948.1"/>
</dbReference>
<dbReference type="SMR" id="Q12DF1"/>
<dbReference type="STRING" id="296591.Bpro_1493"/>
<dbReference type="KEGG" id="pol:Bpro_1493"/>
<dbReference type="eggNOG" id="COG4948">
    <property type="taxonomic scope" value="Bacteria"/>
</dbReference>
<dbReference type="HOGENOM" id="CLU_030273_1_0_4"/>
<dbReference type="OrthoDB" id="8609034at2"/>
<dbReference type="Proteomes" id="UP000001983">
    <property type="component" value="Chromosome"/>
</dbReference>
<dbReference type="GO" id="GO:0050032">
    <property type="term" value="F:L-rhamnonate dehydratase activity"/>
    <property type="evidence" value="ECO:0007669"/>
    <property type="project" value="UniProtKB-UniRule"/>
</dbReference>
<dbReference type="GO" id="GO:0000287">
    <property type="term" value="F:magnesium ion binding"/>
    <property type="evidence" value="ECO:0007669"/>
    <property type="project" value="UniProtKB-UniRule"/>
</dbReference>
<dbReference type="GO" id="GO:0009063">
    <property type="term" value="P:amino acid catabolic process"/>
    <property type="evidence" value="ECO:0007669"/>
    <property type="project" value="InterPro"/>
</dbReference>
<dbReference type="GO" id="GO:0016052">
    <property type="term" value="P:carbohydrate catabolic process"/>
    <property type="evidence" value="ECO:0007669"/>
    <property type="project" value="TreeGrafter"/>
</dbReference>
<dbReference type="CDD" id="cd03327">
    <property type="entry name" value="MR_like_2"/>
    <property type="match status" value="1"/>
</dbReference>
<dbReference type="FunFam" id="3.20.20.120:FF:000005">
    <property type="entry name" value="Putative L-rhamnonate dehydratase"/>
    <property type="match status" value="1"/>
</dbReference>
<dbReference type="Gene3D" id="3.20.20.120">
    <property type="entry name" value="Enolase-like C-terminal domain"/>
    <property type="match status" value="1"/>
</dbReference>
<dbReference type="Gene3D" id="3.30.390.10">
    <property type="entry name" value="Enolase-like, N-terminal domain"/>
    <property type="match status" value="1"/>
</dbReference>
<dbReference type="HAMAP" id="MF_01288">
    <property type="entry name" value="Rhamnon_dehydrat"/>
    <property type="match status" value="1"/>
</dbReference>
<dbReference type="InterPro" id="IPR036849">
    <property type="entry name" value="Enolase-like_C_sf"/>
</dbReference>
<dbReference type="InterPro" id="IPR029017">
    <property type="entry name" value="Enolase-like_N"/>
</dbReference>
<dbReference type="InterPro" id="IPR029065">
    <property type="entry name" value="Enolase_C-like"/>
</dbReference>
<dbReference type="InterPro" id="IPR023444">
    <property type="entry name" value="L-Rhamnon_dehydrat"/>
</dbReference>
<dbReference type="InterPro" id="IPR018110">
    <property type="entry name" value="Mandel_Rmase/mucon_lact_enz_CS"/>
</dbReference>
<dbReference type="InterPro" id="IPR013342">
    <property type="entry name" value="Mandelate_racemase_C"/>
</dbReference>
<dbReference type="InterPro" id="IPR013341">
    <property type="entry name" value="Mandelate_racemase_N_dom"/>
</dbReference>
<dbReference type="InterPro" id="IPR046945">
    <property type="entry name" value="RHMD-like"/>
</dbReference>
<dbReference type="NCBIfam" id="NF011968">
    <property type="entry name" value="PRK15440.1"/>
    <property type="match status" value="1"/>
</dbReference>
<dbReference type="PANTHER" id="PTHR13794">
    <property type="entry name" value="ENOLASE SUPERFAMILY, MANDELATE RACEMASE"/>
    <property type="match status" value="1"/>
</dbReference>
<dbReference type="PANTHER" id="PTHR13794:SF58">
    <property type="entry name" value="MITOCHONDRIAL ENOLASE SUPERFAMILY MEMBER 1"/>
    <property type="match status" value="1"/>
</dbReference>
<dbReference type="Pfam" id="PF13378">
    <property type="entry name" value="MR_MLE_C"/>
    <property type="match status" value="1"/>
</dbReference>
<dbReference type="Pfam" id="PF02746">
    <property type="entry name" value="MR_MLE_N"/>
    <property type="match status" value="1"/>
</dbReference>
<dbReference type="SFLD" id="SFLDG00179">
    <property type="entry name" value="mandelate_racemase"/>
    <property type="match status" value="1"/>
</dbReference>
<dbReference type="SFLD" id="SFLDF00006">
    <property type="entry name" value="rhamnonate_dehydratase"/>
    <property type="match status" value="1"/>
</dbReference>
<dbReference type="SMART" id="SM00922">
    <property type="entry name" value="MR_MLE"/>
    <property type="match status" value="1"/>
</dbReference>
<dbReference type="SUPFAM" id="SSF51604">
    <property type="entry name" value="Enolase C-terminal domain-like"/>
    <property type="match status" value="1"/>
</dbReference>
<dbReference type="SUPFAM" id="SSF54826">
    <property type="entry name" value="Enolase N-terminal domain-like"/>
    <property type="match status" value="1"/>
</dbReference>
<dbReference type="PROSITE" id="PS00908">
    <property type="entry name" value="MR_MLE_1"/>
    <property type="match status" value="1"/>
</dbReference>
<protein>
    <recommendedName>
        <fullName>L-rhamnonate dehydratase</fullName>
        <shortName>RhamD</shortName>
        <ecNumber>4.2.1.90</ecNumber>
    </recommendedName>
</protein>
<proteinExistence type="evidence at protein level"/>
<sequence length="395" mass="44253">MNNMPTIKHVRAFTVRGGGADYHDQGSGHWIDDHISTPMGRYPEYRQSRQSFGINVLGTLVVEIEASDGTVGFSVTTGGELGCWIVEKHLARFIEGAKVTDIEKIWDQMFNATLYYGRKGIVLNTISGVDLALWDLLAKVRKEPVHALLGGPVRDELTFYATGARPDLAKKMGFIGGKLPLHHGPAEREEGLKKNLELLGEMRQRVGDDFWLMYDCWMSLDVEYATRLANAASEYKLKWIEEALPPDDYWGYAELRRNVPRGMLVTTGEHEATRWGFRMLLEMECCDILQPDVGWCGGITELLKISALADAHGKLVVPHGSSVYSYHFVITRHNSPFSEFLMMAPKADEVVPMFNPMLLDEPVPVNGRMKASALDAPGFGVRLNPECALQRPFPR</sequence>
<organism>
    <name type="scientific">Polaromonas sp. (strain JS666 / ATCC BAA-500)</name>
    <dbReference type="NCBI Taxonomy" id="296591"/>
    <lineage>
        <taxon>Bacteria</taxon>
        <taxon>Pseudomonadati</taxon>
        <taxon>Pseudomonadota</taxon>
        <taxon>Betaproteobacteria</taxon>
        <taxon>Burkholderiales</taxon>
        <taxon>Comamonadaceae</taxon>
        <taxon>Polaromonas</taxon>
    </lineage>
</organism>
<name>RHMD_POLSJ</name>
<feature type="chain" id="PRO_0000351701" description="L-rhamnonate dehydratase">
    <location>
        <begin position="1"/>
        <end position="395"/>
    </location>
</feature>
<feature type="active site" description="Proton acceptor" evidence="1">
    <location>
        <position position="319"/>
    </location>
</feature>
<feature type="binding site" evidence="1">
    <location>
        <position position="23"/>
    </location>
    <ligand>
        <name>substrate</name>
    </ligand>
</feature>
<feature type="binding site" evidence="1">
    <location>
        <position position="49"/>
    </location>
    <ligand>
        <name>substrate</name>
    </ligand>
</feature>
<feature type="binding site" evidence="1">
    <location>
        <position position="215"/>
    </location>
    <ligand>
        <name>Mg(2+)</name>
        <dbReference type="ChEBI" id="CHEBI:18420"/>
    </ligand>
</feature>
<feature type="binding site" evidence="1">
    <location>
        <position position="241"/>
    </location>
    <ligand>
        <name>Mg(2+)</name>
        <dbReference type="ChEBI" id="CHEBI:18420"/>
    </ligand>
</feature>
<feature type="binding site" evidence="1">
    <location>
        <position position="269"/>
    </location>
    <ligand>
        <name>Mg(2+)</name>
        <dbReference type="ChEBI" id="CHEBI:18420"/>
    </ligand>
</feature>
<feature type="binding site" evidence="1">
    <location>
        <position position="339"/>
    </location>
    <ligand>
        <name>substrate</name>
    </ligand>
</feature>
<feature type="site" description="Increases basicity of active site His" evidence="1">
    <location>
        <position position="292"/>
    </location>
</feature>
<feature type="site" description="Transition state stabilizer" evidence="1">
    <location>
        <position position="339"/>
    </location>
</feature>
<keyword id="KW-0456">Lyase</keyword>
<keyword id="KW-0460">Magnesium</keyword>
<keyword id="KW-0479">Metal-binding</keyword>
<keyword id="KW-1185">Reference proteome</keyword>
<reference key="1">
    <citation type="journal article" date="2008" name="Appl. Environ. Microbiol.">
        <title>The genome of Polaromonas sp. strain JS666: insights into the evolution of a hydrocarbon- and xenobiotic-degrading bacterium, and features of relevance to biotechnology.</title>
        <authorList>
            <person name="Mattes T.E."/>
            <person name="Alexander A.K."/>
            <person name="Richardson P.M."/>
            <person name="Munk A.C."/>
            <person name="Han C.S."/>
            <person name="Stothard P."/>
            <person name="Coleman N.V."/>
        </authorList>
    </citation>
    <scope>NUCLEOTIDE SEQUENCE [LARGE SCALE GENOMIC DNA]</scope>
    <source>
        <strain>JS666 / ATCC BAA-500</strain>
    </source>
</reference>
<reference key="2">
    <citation type="journal article" date="2008" name="Biochemistry">
        <title>Evolution of enzymatic activities in the enolase superfamily: L-rhamnonate dehydratase.</title>
        <authorList>
            <person name="Rakus J.F."/>
            <person name="Fedorov A.A."/>
            <person name="Fedorov E.V."/>
            <person name="Glasner M.E."/>
            <person name="Hubbard B.K."/>
            <person name="Delli J.D."/>
            <person name="Babbitt P.C."/>
            <person name="Almo S.C."/>
            <person name="Gerlt J.A."/>
        </authorList>
    </citation>
    <scope>FUNCTION AS A RHAMNONATE DEHYDRATASE</scope>
</reference>